<feature type="chain" id="PRO_0000350386" description="Dual-specificity RNA methyltransferase RlmN">
    <location>
        <begin position="1"/>
        <end position="388"/>
    </location>
</feature>
<feature type="domain" description="Radical SAM core" evidence="2">
    <location>
        <begin position="115"/>
        <end position="354"/>
    </location>
</feature>
<feature type="active site" description="Proton acceptor" evidence="1">
    <location>
        <position position="109"/>
    </location>
</feature>
<feature type="active site" description="S-methylcysteine intermediate" evidence="1">
    <location>
        <position position="359"/>
    </location>
</feature>
<feature type="binding site" evidence="1">
    <location>
        <position position="129"/>
    </location>
    <ligand>
        <name>[4Fe-4S] cluster</name>
        <dbReference type="ChEBI" id="CHEBI:49883"/>
        <note>4Fe-4S-S-AdoMet</note>
    </ligand>
</feature>
<feature type="binding site" evidence="1">
    <location>
        <position position="133"/>
    </location>
    <ligand>
        <name>[4Fe-4S] cluster</name>
        <dbReference type="ChEBI" id="CHEBI:49883"/>
        <note>4Fe-4S-S-AdoMet</note>
    </ligand>
</feature>
<feature type="binding site" evidence="1">
    <location>
        <position position="136"/>
    </location>
    <ligand>
        <name>[4Fe-4S] cluster</name>
        <dbReference type="ChEBI" id="CHEBI:49883"/>
        <note>4Fe-4S-S-AdoMet</note>
    </ligand>
</feature>
<feature type="binding site" evidence="1">
    <location>
        <begin position="183"/>
        <end position="184"/>
    </location>
    <ligand>
        <name>S-adenosyl-L-methionine</name>
        <dbReference type="ChEBI" id="CHEBI:59789"/>
    </ligand>
</feature>
<feature type="binding site" evidence="1">
    <location>
        <position position="215"/>
    </location>
    <ligand>
        <name>S-adenosyl-L-methionine</name>
        <dbReference type="ChEBI" id="CHEBI:59789"/>
    </ligand>
</feature>
<feature type="binding site" evidence="1">
    <location>
        <begin position="237"/>
        <end position="239"/>
    </location>
    <ligand>
        <name>S-adenosyl-L-methionine</name>
        <dbReference type="ChEBI" id="CHEBI:59789"/>
    </ligand>
</feature>
<feature type="binding site" evidence="1">
    <location>
        <position position="316"/>
    </location>
    <ligand>
        <name>S-adenosyl-L-methionine</name>
        <dbReference type="ChEBI" id="CHEBI:59789"/>
    </ligand>
</feature>
<feature type="disulfide bond" description="(transient)" evidence="1">
    <location>
        <begin position="122"/>
        <end position="359"/>
    </location>
</feature>
<sequence length="388" mass="43512">MSEQIVTPESSTPVVLNNETKINLLDLNRQQMREFFKNLGEKPFRADQVMKWMYHYCCDNFDEMTDINKVLRGKLKEVAEIRAPEVVEEQRSSDGTIKWAIAVGDQRVETVYIPEDDRATLCVSSQVGCALECKFCSTAQQGFNRNLRVSEIIGQVWRAAKIVGAAKVTGQRPITNVVMMGMGEPLLNLTNVVPAMEIMLDDFGFGLSKRRVTLSTSGVVPALDKLGDMIDVALAISLHAPNDTIRDEIVPINKKYNIETFLGAVRRYLEKSNANQGRVTIEYVMLDHVNDGTEHAHQLAELLKETPCKINLIPWNPFPGAPYGRSSNSRIDRFSKVLMSYGFTTIVRKTRGDDIDAACGQLAGDVIDRTKRTLRKRMQGEVIDIKAI</sequence>
<name>RLMN_SALCH</name>
<organism>
    <name type="scientific">Salmonella choleraesuis (strain SC-B67)</name>
    <dbReference type="NCBI Taxonomy" id="321314"/>
    <lineage>
        <taxon>Bacteria</taxon>
        <taxon>Pseudomonadati</taxon>
        <taxon>Pseudomonadota</taxon>
        <taxon>Gammaproteobacteria</taxon>
        <taxon>Enterobacterales</taxon>
        <taxon>Enterobacteriaceae</taxon>
        <taxon>Salmonella</taxon>
    </lineage>
</organism>
<accession>Q57LI4</accession>
<comment type="function">
    <text evidence="1">Specifically methylates position 2 of adenine 2503 in 23S rRNA and position 2 of adenine 37 in tRNAs. m2A2503 modification seems to play a crucial role in the proofreading step occurring at the peptidyl transferase center and thus would serve to optimize ribosomal fidelity.</text>
</comment>
<comment type="catalytic activity">
    <reaction evidence="1">
        <text>adenosine(2503) in 23S rRNA + 2 reduced [2Fe-2S]-[ferredoxin] + 2 S-adenosyl-L-methionine = 2-methyladenosine(2503) in 23S rRNA + 5'-deoxyadenosine + L-methionine + 2 oxidized [2Fe-2S]-[ferredoxin] + S-adenosyl-L-homocysteine</text>
        <dbReference type="Rhea" id="RHEA:42916"/>
        <dbReference type="Rhea" id="RHEA-COMP:10000"/>
        <dbReference type="Rhea" id="RHEA-COMP:10001"/>
        <dbReference type="Rhea" id="RHEA-COMP:10152"/>
        <dbReference type="Rhea" id="RHEA-COMP:10282"/>
        <dbReference type="ChEBI" id="CHEBI:17319"/>
        <dbReference type="ChEBI" id="CHEBI:33737"/>
        <dbReference type="ChEBI" id="CHEBI:33738"/>
        <dbReference type="ChEBI" id="CHEBI:57844"/>
        <dbReference type="ChEBI" id="CHEBI:57856"/>
        <dbReference type="ChEBI" id="CHEBI:59789"/>
        <dbReference type="ChEBI" id="CHEBI:74411"/>
        <dbReference type="ChEBI" id="CHEBI:74497"/>
        <dbReference type="EC" id="2.1.1.192"/>
    </reaction>
</comment>
<comment type="catalytic activity">
    <reaction evidence="1">
        <text>adenosine(37) in tRNA + 2 reduced [2Fe-2S]-[ferredoxin] + 2 S-adenosyl-L-methionine = 2-methyladenosine(37) in tRNA + 5'-deoxyadenosine + L-methionine + 2 oxidized [2Fe-2S]-[ferredoxin] + S-adenosyl-L-homocysteine</text>
        <dbReference type="Rhea" id="RHEA:43332"/>
        <dbReference type="Rhea" id="RHEA-COMP:10000"/>
        <dbReference type="Rhea" id="RHEA-COMP:10001"/>
        <dbReference type="Rhea" id="RHEA-COMP:10162"/>
        <dbReference type="Rhea" id="RHEA-COMP:10485"/>
        <dbReference type="ChEBI" id="CHEBI:17319"/>
        <dbReference type="ChEBI" id="CHEBI:33737"/>
        <dbReference type="ChEBI" id="CHEBI:33738"/>
        <dbReference type="ChEBI" id="CHEBI:57844"/>
        <dbReference type="ChEBI" id="CHEBI:57856"/>
        <dbReference type="ChEBI" id="CHEBI:59789"/>
        <dbReference type="ChEBI" id="CHEBI:74411"/>
        <dbReference type="ChEBI" id="CHEBI:74497"/>
        <dbReference type="EC" id="2.1.1.192"/>
    </reaction>
</comment>
<comment type="cofactor">
    <cofactor evidence="1">
        <name>[4Fe-4S] cluster</name>
        <dbReference type="ChEBI" id="CHEBI:49883"/>
    </cofactor>
    <text evidence="1">Binds 1 [4Fe-4S] cluster. The cluster is coordinated with 3 cysteines and an exchangeable S-adenosyl-L-methionine.</text>
</comment>
<comment type="subcellular location">
    <subcellularLocation>
        <location evidence="1">Cytoplasm</location>
    </subcellularLocation>
</comment>
<comment type="miscellaneous">
    <text evidence="1">Reaction proceeds by a ping-pong mechanism involving intermediate methylation of a conserved cysteine residue.</text>
</comment>
<comment type="similarity">
    <text evidence="1">Belongs to the radical SAM superfamily. RlmN family.</text>
</comment>
<proteinExistence type="inferred from homology"/>
<gene>
    <name evidence="1" type="primary">rlmN</name>
    <name type="ordered locus">SCH_2522</name>
</gene>
<evidence type="ECO:0000255" key="1">
    <source>
        <dbReference type="HAMAP-Rule" id="MF_01849"/>
    </source>
</evidence>
<evidence type="ECO:0000255" key="2">
    <source>
        <dbReference type="PROSITE-ProRule" id="PRU01266"/>
    </source>
</evidence>
<protein>
    <recommendedName>
        <fullName evidence="1">Dual-specificity RNA methyltransferase RlmN</fullName>
        <ecNumber evidence="1">2.1.1.192</ecNumber>
    </recommendedName>
    <alternativeName>
        <fullName evidence="1">23S rRNA (adenine(2503)-C(2))-methyltransferase</fullName>
    </alternativeName>
    <alternativeName>
        <fullName evidence="1">23S rRNA m2A2503 methyltransferase</fullName>
    </alternativeName>
    <alternativeName>
        <fullName evidence="1">Ribosomal RNA large subunit methyltransferase N</fullName>
    </alternativeName>
    <alternativeName>
        <fullName evidence="1">tRNA (adenine(37)-C(2))-methyltransferase</fullName>
    </alternativeName>
    <alternativeName>
        <fullName evidence="1">tRNA m2A37 methyltransferase</fullName>
    </alternativeName>
</protein>
<reference key="1">
    <citation type="journal article" date="2005" name="Nucleic Acids Res.">
        <title>The genome sequence of Salmonella enterica serovar Choleraesuis, a highly invasive and resistant zoonotic pathogen.</title>
        <authorList>
            <person name="Chiu C.-H."/>
            <person name="Tang P."/>
            <person name="Chu C."/>
            <person name="Hu S."/>
            <person name="Bao Q."/>
            <person name="Yu J."/>
            <person name="Chou Y.-Y."/>
            <person name="Wang H.-S."/>
            <person name="Lee Y.-S."/>
        </authorList>
    </citation>
    <scope>NUCLEOTIDE SEQUENCE [LARGE SCALE GENOMIC DNA]</scope>
    <source>
        <strain>SC-B67</strain>
    </source>
</reference>
<dbReference type="EC" id="2.1.1.192" evidence="1"/>
<dbReference type="EMBL" id="AE017220">
    <property type="protein sequence ID" value="AAX66428.1"/>
    <property type="molecule type" value="Genomic_DNA"/>
</dbReference>
<dbReference type="RefSeq" id="WP_000003206.1">
    <property type="nucleotide sequence ID" value="NC_006905.1"/>
</dbReference>
<dbReference type="SMR" id="Q57LI4"/>
<dbReference type="KEGG" id="sec:SCH_2522"/>
<dbReference type="HOGENOM" id="CLU_029101_0_0_6"/>
<dbReference type="Proteomes" id="UP000000538">
    <property type="component" value="Chromosome"/>
</dbReference>
<dbReference type="GO" id="GO:0005737">
    <property type="term" value="C:cytoplasm"/>
    <property type="evidence" value="ECO:0007669"/>
    <property type="project" value="UniProtKB-SubCell"/>
</dbReference>
<dbReference type="GO" id="GO:0051539">
    <property type="term" value="F:4 iron, 4 sulfur cluster binding"/>
    <property type="evidence" value="ECO:0007669"/>
    <property type="project" value="UniProtKB-UniRule"/>
</dbReference>
<dbReference type="GO" id="GO:0046872">
    <property type="term" value="F:metal ion binding"/>
    <property type="evidence" value="ECO:0007669"/>
    <property type="project" value="UniProtKB-KW"/>
</dbReference>
<dbReference type="GO" id="GO:0070040">
    <property type="term" value="F:rRNA (adenine(2503)-C2-)-methyltransferase activity"/>
    <property type="evidence" value="ECO:0007669"/>
    <property type="project" value="UniProtKB-UniRule"/>
</dbReference>
<dbReference type="GO" id="GO:0019843">
    <property type="term" value="F:rRNA binding"/>
    <property type="evidence" value="ECO:0007669"/>
    <property type="project" value="UniProtKB-UniRule"/>
</dbReference>
<dbReference type="GO" id="GO:0002935">
    <property type="term" value="F:tRNA (adenine(37)-C2)-methyltransferase activity"/>
    <property type="evidence" value="ECO:0007669"/>
    <property type="project" value="UniProtKB-UniRule"/>
</dbReference>
<dbReference type="GO" id="GO:0000049">
    <property type="term" value="F:tRNA binding"/>
    <property type="evidence" value="ECO:0007669"/>
    <property type="project" value="UniProtKB-UniRule"/>
</dbReference>
<dbReference type="GO" id="GO:0070475">
    <property type="term" value="P:rRNA base methylation"/>
    <property type="evidence" value="ECO:0007669"/>
    <property type="project" value="UniProtKB-UniRule"/>
</dbReference>
<dbReference type="GO" id="GO:0030488">
    <property type="term" value="P:tRNA methylation"/>
    <property type="evidence" value="ECO:0007669"/>
    <property type="project" value="UniProtKB-UniRule"/>
</dbReference>
<dbReference type="CDD" id="cd01335">
    <property type="entry name" value="Radical_SAM"/>
    <property type="match status" value="1"/>
</dbReference>
<dbReference type="FunFam" id="1.10.150.530:FF:000001">
    <property type="entry name" value="Dual-specificity RNA methyltransferase RlmN"/>
    <property type="match status" value="1"/>
</dbReference>
<dbReference type="FunFam" id="3.20.20.70:FF:000008">
    <property type="entry name" value="Dual-specificity RNA methyltransferase RlmN"/>
    <property type="match status" value="1"/>
</dbReference>
<dbReference type="Gene3D" id="1.10.150.530">
    <property type="match status" value="1"/>
</dbReference>
<dbReference type="Gene3D" id="3.20.20.70">
    <property type="entry name" value="Aldolase class I"/>
    <property type="match status" value="1"/>
</dbReference>
<dbReference type="HAMAP" id="MF_01849">
    <property type="entry name" value="RNA_methyltr_RlmN"/>
    <property type="match status" value="1"/>
</dbReference>
<dbReference type="InterPro" id="IPR013785">
    <property type="entry name" value="Aldolase_TIM"/>
</dbReference>
<dbReference type="InterPro" id="IPR040072">
    <property type="entry name" value="Methyltransferase_A"/>
</dbReference>
<dbReference type="InterPro" id="IPR048641">
    <property type="entry name" value="RlmN_N"/>
</dbReference>
<dbReference type="InterPro" id="IPR027492">
    <property type="entry name" value="RNA_MTrfase_RlmN"/>
</dbReference>
<dbReference type="InterPro" id="IPR004383">
    <property type="entry name" value="rRNA_lsu_MTrfase_RlmN/Cfr"/>
</dbReference>
<dbReference type="InterPro" id="IPR007197">
    <property type="entry name" value="rSAM"/>
</dbReference>
<dbReference type="NCBIfam" id="NF008396">
    <property type="entry name" value="PRK11194.1"/>
    <property type="match status" value="1"/>
</dbReference>
<dbReference type="NCBIfam" id="TIGR00048">
    <property type="entry name" value="rRNA_mod_RlmN"/>
    <property type="match status" value="1"/>
</dbReference>
<dbReference type="PANTHER" id="PTHR30544">
    <property type="entry name" value="23S RRNA METHYLTRANSFERASE"/>
    <property type="match status" value="1"/>
</dbReference>
<dbReference type="PANTHER" id="PTHR30544:SF5">
    <property type="entry name" value="RADICAL SAM CORE DOMAIN-CONTAINING PROTEIN"/>
    <property type="match status" value="1"/>
</dbReference>
<dbReference type="Pfam" id="PF04055">
    <property type="entry name" value="Radical_SAM"/>
    <property type="match status" value="1"/>
</dbReference>
<dbReference type="Pfam" id="PF21016">
    <property type="entry name" value="RlmN_N"/>
    <property type="match status" value="1"/>
</dbReference>
<dbReference type="PIRSF" id="PIRSF006004">
    <property type="entry name" value="CHP00048"/>
    <property type="match status" value="1"/>
</dbReference>
<dbReference type="SFLD" id="SFLDF00275">
    <property type="entry name" value="adenosine_C2_methyltransferase"/>
    <property type="match status" value="1"/>
</dbReference>
<dbReference type="SFLD" id="SFLDS00029">
    <property type="entry name" value="Radical_SAM"/>
    <property type="match status" value="1"/>
</dbReference>
<dbReference type="SUPFAM" id="SSF102114">
    <property type="entry name" value="Radical SAM enzymes"/>
    <property type="match status" value="1"/>
</dbReference>
<dbReference type="PROSITE" id="PS51918">
    <property type="entry name" value="RADICAL_SAM"/>
    <property type="match status" value="1"/>
</dbReference>
<keyword id="KW-0004">4Fe-4S</keyword>
<keyword id="KW-0963">Cytoplasm</keyword>
<keyword id="KW-1015">Disulfide bond</keyword>
<keyword id="KW-0408">Iron</keyword>
<keyword id="KW-0411">Iron-sulfur</keyword>
<keyword id="KW-0479">Metal-binding</keyword>
<keyword id="KW-0489">Methyltransferase</keyword>
<keyword id="KW-0698">rRNA processing</keyword>
<keyword id="KW-0949">S-adenosyl-L-methionine</keyword>
<keyword id="KW-0808">Transferase</keyword>
<keyword id="KW-0819">tRNA processing</keyword>